<reference key="1">
    <citation type="journal article" date="1994" name="Biochim. Biophys. Acta">
        <title>The complete primary structure of the long form of mouse alpha 1(IX) collagen chain and its expression during limb development.</title>
        <authorList>
            <person name="Abe N."/>
            <person name="Yoshioka H."/>
            <person name="Inoue H."/>
            <person name="Ninomiya Y."/>
        </authorList>
    </citation>
    <scope>NUCLEOTIDE SEQUENCE [MRNA] (ISOFORM LONG)</scope>
</reference>
<reference key="2">
    <citation type="journal article" date="1994" name="Matrix Biol.">
        <title>Assembly and sequencing of a cDNA covering the entire mouse alpha 1(IX) collagen chain.</title>
        <authorList>
            <person name="Rokos I."/>
            <person name="Muragaki Y."/>
            <person name="Warman M."/>
            <person name="Olsen B.R."/>
        </authorList>
    </citation>
    <scope>NUCLEOTIDE SEQUENCE [MRNA] (ISOFORM LONG)</scope>
    <source>
        <tissue>Embryo</tissue>
    </source>
</reference>
<reference key="3">
    <citation type="journal article" date="1991" name="Biochim. Biophys. Acta">
        <title>Specific hybridization probes for mouse type I, II, III and IX collagen mRNAs.</title>
        <authorList>
            <person name="Metsaeranta M."/>
            <person name="Toman D."/>
            <person name="de Crombrugghe B."/>
            <person name="Vuorio E."/>
        </authorList>
    </citation>
    <scope>NUCLEOTIDE SEQUENCE [GENOMIC DNA] OF 759-906</scope>
</reference>
<reference key="4">
    <citation type="journal article" date="1990" name="Proc. Natl. Acad. Sci. U.S.A.">
        <title>The alpha 1 (IX) collagen gene gives rise to two different transcripts in both mouse embryonic and human fetal RNA.</title>
        <authorList>
            <person name="Muragaki Y."/>
            <person name="Nishimura I."/>
            <person name="Henney A."/>
            <person name="Ninomiya Y."/>
            <person name="Olsen B.R."/>
        </authorList>
    </citation>
    <scope>ALTERNATIVE SPLICING</scope>
    <source>
        <strain>BALB/cJ</strain>
        <tissue>Liver</tissue>
        <tissue>Spleen</tissue>
    </source>
</reference>
<name>CO9A1_MOUSE</name>
<sequence>MKNFWKISVFFCVCSCLGPWVSATLKRRARFPANSISNGGSELCPKIRIGQDDLPGFDLISQFQIEKAASRRTIQRVVGSTALQVAYKLGSNVDFRIPTRHLYPSGLPEEYSFLTTFRMTGSTLEKHWNIWQIQDSAGREQVGVKINGQTKSVAFSYKGLDGSLQTAAFLNLPSLFDSRWHKLMIGVERTSATLFIDCIRIESLPIKPRGQIDADGFAVLGKLVDNPQVSVPFELQWMLIHCDPLRPRRETCHELPIRITTSQTTDERGPPGEQGPPGPPGPPGVPGIDGIDGDRGPKGPPGPPGPPGDPGKPGAPGKPGTPGADGLTGPDGSPGSVGPRGQKGEPGVPGSRGFPGRGIPGPPGPPGTTGLPGELGRVGPIGDPGKRGPPGPPGPPGPSGTIGFHDGDPLCPNSCPPGRSGYPGLPGMRGHKGAKGEIGEPGRQGHKGEEGDQGELGEVGAQGPPGPQGLRGITGIVGDKGEKGARGFDGEPGPQGIPGAAGDQGQRGPPGETGPKGDRGIQGSRGIPGSPGPKGDTGLPGVDGRDGIPGMPGTKGEAGKPGPPGDVGLQGLPGVPGIPGAKGVAGEKGNTGAPGKPGQLGSSGKPGQQGPPGEVGPRGPRGLPGSRGPVGPEGSPGIPGKLGSVGSPGLPGLPGPPGLPGMKGDRGVFGEPGPKGEQGASGEEGEAGARGDLGDMGQPGPKGSVGNPGEPGLRGPEGIRGLPGVEGPRGPPGPRGMQGEQGATGLPGIQGPPGRAPTDQHIKQVCMRVVQEHFVEMAASLKRPDTGASGLPGRPGPPGPPGPPGENGFPGQMGIRGLPGIKGPPGALGLRGPKGDLGEKGERGPPGRGPKGLPGAIGLPGDPGPASYGKNGRDGEQGPPGVAGIPGVPGPPGPPGPPGFCEPASCTLQSGQRAFSKGPDK</sequence>
<protein>
    <recommendedName>
        <fullName>Collagen alpha-1(IX) chain</fullName>
    </recommendedName>
</protein>
<accession>Q05722</accession>
<accession>Q61269</accession>
<accession>Q61270</accession>
<accession>Q61433</accession>
<accession>Q61940</accession>
<feature type="signal peptide" evidence="2">
    <location>
        <begin position="1"/>
        <end position="23"/>
    </location>
</feature>
<feature type="chain" id="PRO_0000005766" description="Collagen alpha-1(IX) chain">
    <location>
        <begin position="24"/>
        <end position="921"/>
    </location>
</feature>
<feature type="domain" description="Laminin G-like">
    <location>
        <begin position="50"/>
        <end position="244"/>
    </location>
</feature>
<feature type="domain" description="Collagen-like 1">
    <location>
        <begin position="269"/>
        <end position="325"/>
    </location>
</feature>
<feature type="domain" description="Collagen-like 2">
    <location>
        <begin position="326"/>
        <end position="356"/>
    </location>
</feature>
<feature type="domain" description="Collagen-like 3">
    <location>
        <begin position="358"/>
        <end position="403"/>
    </location>
</feature>
<feature type="domain" description="Collagen-like 4">
    <location>
        <begin position="416"/>
        <end position="472"/>
    </location>
</feature>
<feature type="domain" description="Collagen-like 5">
    <location>
        <begin position="473"/>
        <end position="512"/>
    </location>
</feature>
<feature type="domain" description="Collagen-like 6">
    <location>
        <begin position="604"/>
        <end position="656"/>
    </location>
</feature>
<feature type="domain" description="Collagen-like 7">
    <location>
        <begin position="657"/>
        <end position="711"/>
    </location>
</feature>
<feature type="domain" description="Collagen-like 8">
    <location>
        <begin position="712"/>
        <end position="755"/>
    </location>
</feature>
<feature type="domain" description="Collagen-like 9">
    <location>
        <begin position="790"/>
        <end position="847"/>
    </location>
</feature>
<feature type="region of interest" description="Nonhelical region (NC4)">
    <location>
        <begin position="24"/>
        <end position="268"/>
    </location>
</feature>
<feature type="region of interest" description="Disordered" evidence="3">
    <location>
        <begin position="253"/>
        <end position="759"/>
    </location>
</feature>
<feature type="region of interest" description="Triple-helical region (COL3)">
    <location>
        <begin position="269"/>
        <end position="405"/>
    </location>
</feature>
<feature type="region of interest" description="Nonhelical region (NC3)">
    <location>
        <begin position="406"/>
        <end position="417"/>
    </location>
</feature>
<feature type="region of interest" description="Triple-helical region (COL2)">
    <location>
        <begin position="418"/>
        <end position="756"/>
    </location>
</feature>
<feature type="region of interest" description="Nonhelical region (NC2)">
    <location>
        <begin position="757"/>
        <end position="786"/>
    </location>
</feature>
<feature type="region of interest" description="Disordered" evidence="3">
    <location>
        <begin position="783"/>
        <end position="921"/>
    </location>
</feature>
<feature type="region of interest" description="Triple-helical region (COL1)">
    <location>
        <begin position="787"/>
        <end position="901"/>
    </location>
</feature>
<feature type="region of interest" description="Nonhelical region (NC1)">
    <location>
        <begin position="902"/>
        <end position="921"/>
    </location>
</feature>
<feature type="compositionally biased region" description="Pro residues" evidence="3">
    <location>
        <begin position="273"/>
        <end position="285"/>
    </location>
</feature>
<feature type="compositionally biased region" description="Pro residues" evidence="3">
    <location>
        <begin position="298"/>
        <end position="310"/>
    </location>
</feature>
<feature type="compositionally biased region" description="Low complexity" evidence="3">
    <location>
        <begin position="368"/>
        <end position="383"/>
    </location>
</feature>
<feature type="compositionally biased region" description="Pro residues" evidence="3">
    <location>
        <begin position="387"/>
        <end position="398"/>
    </location>
</feature>
<feature type="compositionally biased region" description="Basic and acidic residues" evidence="3">
    <location>
        <begin position="479"/>
        <end position="489"/>
    </location>
</feature>
<feature type="compositionally biased region" description="Low complexity" evidence="3">
    <location>
        <begin position="594"/>
        <end position="632"/>
    </location>
</feature>
<feature type="compositionally biased region" description="Low complexity" evidence="3">
    <location>
        <begin position="639"/>
        <end position="650"/>
    </location>
</feature>
<feature type="compositionally biased region" description="Pro residues" evidence="3">
    <location>
        <begin position="794"/>
        <end position="804"/>
    </location>
</feature>
<feature type="compositionally biased region" description="Basic and acidic residues" evidence="3">
    <location>
        <begin position="833"/>
        <end position="845"/>
    </location>
</feature>
<feature type="compositionally biased region" description="Pro residues" evidence="3">
    <location>
        <begin position="888"/>
        <end position="900"/>
    </location>
</feature>
<feature type="binding site" evidence="1">
    <location>
        <position position="213"/>
    </location>
    <ligand>
        <name>Zn(2+)</name>
        <dbReference type="ChEBI" id="CHEBI:29105"/>
    </ligand>
</feature>
<feature type="binding site" evidence="1">
    <location>
        <position position="215"/>
    </location>
    <ligand>
        <name>Zn(2+)</name>
        <dbReference type="ChEBI" id="CHEBI:29105"/>
    </ligand>
</feature>
<feature type="binding site" evidence="1">
    <location>
        <position position="253"/>
    </location>
    <ligand>
        <name>Zn(2+)</name>
        <dbReference type="ChEBI" id="CHEBI:29105"/>
    </ligand>
</feature>
<feature type="disulfide bond" evidence="1">
    <location>
        <begin position="44"/>
        <end position="242"/>
    </location>
</feature>
<feature type="disulfide bond" evidence="1">
    <location>
        <begin position="198"/>
        <end position="252"/>
    </location>
</feature>
<feature type="disulfide bond" description="Interchain" evidence="1">
    <location>
        <position position="411"/>
    </location>
</feature>
<feature type="disulfide bond" description="Interchain" evidence="1">
    <location>
        <position position="415"/>
    </location>
</feature>
<feature type="splice variant" id="VSP_001143" description="In isoform Short." evidence="4">
    <location>
        <begin position="1"/>
        <end position="260"/>
    </location>
</feature>
<feature type="splice variant" id="VSP_001144" description="In isoform Short." evidence="4">
    <original>T</original>
    <variation>MAWAAWGRGVLGLSLMLSGLRLCAAQT</variation>
    <location>
        <position position="261"/>
    </location>
</feature>
<feature type="sequence conflict" description="In Ref. 2; AAA21834." evidence="4" ref="2">
    <original>E</original>
    <variation>R</variation>
    <location>
        <position position="110"/>
    </location>
</feature>
<feature type="sequence conflict" description="In Ref. 2; AAA21834." evidence="4" ref="2">
    <original>M</original>
    <variation>V</variation>
    <location>
        <position position="238"/>
    </location>
</feature>
<feature type="sequence conflict" description="In Ref. 2; AAA21834." evidence="4" ref="2">
    <original>D</original>
    <variation>G</variation>
    <location>
        <position position="289"/>
    </location>
</feature>
<feature type="sequence conflict" description="In Ref. 2; AAA21834." evidence="4" ref="2">
    <original>A</original>
    <variation>D</variation>
    <location>
        <position position="461"/>
    </location>
</feature>
<feature type="sequence conflict" description="In Ref. 2; AAA21834." evidence="4" ref="2">
    <original>K</original>
    <variation>E</variation>
    <location>
        <position position="516"/>
    </location>
</feature>
<feature type="sequence conflict" description="In Ref. 2; AAA21834." evidence="4" ref="2">
    <original>LQ</original>
    <variation>IA</variation>
    <location>
        <begin position="569"/>
        <end position="570"/>
    </location>
</feature>
<feature type="sequence conflict" description="In Ref. 2; AAA21834." evidence="4" ref="2">
    <original>E</original>
    <variation>D</variation>
    <location>
        <position position="740"/>
    </location>
</feature>
<feature type="sequence conflict" description="In Ref. 2; AAA21834 and 3; CAA41049." evidence="4" ref="2 3">
    <original>V</original>
    <variation>A</variation>
    <location>
        <position position="775"/>
    </location>
</feature>
<gene>
    <name type="primary">Col9a1</name>
</gene>
<organism>
    <name type="scientific">Mus musculus</name>
    <name type="common">Mouse</name>
    <dbReference type="NCBI Taxonomy" id="10090"/>
    <lineage>
        <taxon>Eukaryota</taxon>
        <taxon>Metazoa</taxon>
        <taxon>Chordata</taxon>
        <taxon>Craniata</taxon>
        <taxon>Vertebrata</taxon>
        <taxon>Euteleostomi</taxon>
        <taxon>Mammalia</taxon>
        <taxon>Eutheria</taxon>
        <taxon>Euarchontoglires</taxon>
        <taxon>Glires</taxon>
        <taxon>Rodentia</taxon>
        <taxon>Myomorpha</taxon>
        <taxon>Muroidea</taxon>
        <taxon>Muridae</taxon>
        <taxon>Murinae</taxon>
        <taxon>Mus</taxon>
        <taxon>Mus</taxon>
    </lineage>
</organism>
<comment type="function">
    <text>Structural component of hyaline cartilage and vitreous of the eye.</text>
</comment>
<comment type="subunit">
    <text>Heterotrimer of an alpha 1(IX), an alpha 2(IX) and an alpha 3(IX) chain.</text>
</comment>
<comment type="subcellular location">
    <subcellularLocation>
        <location evidence="1">Secreted</location>
        <location evidence="1">Extracellular space</location>
        <location evidence="1">Extracellular matrix</location>
    </subcellularLocation>
</comment>
<comment type="alternative products">
    <event type="alternative splicing"/>
    <isoform>
        <id>Q05722-1</id>
        <name>Long</name>
        <sequence type="displayed"/>
    </isoform>
    <isoform>
        <id>Q05722-2</id>
        <name>Short</name>
        <sequence type="described" ref="VSP_001143 VSP_001144"/>
    </isoform>
    <text>Additional isoforms seem to exist.</text>
</comment>
<comment type="domain">
    <text>Each subunit is composed of three triple-helical domains interspersed with non-collagenous domains. The globular domain at the N-terminus of type IX collagen molecules represents the NC4 domain which may participate in electrostatic interactions with polyanionic glycosaminoglycans in cartilage.</text>
</comment>
<comment type="PTM">
    <text>Covalently linked to the telopeptides of type II collagen by lysine-derived cross-links.</text>
</comment>
<comment type="PTM">
    <text>Prolines at the third position of the tripeptide repeating unit (G-X-Y) are hydroxylated in some or all of the chains.</text>
</comment>
<comment type="similarity">
    <text evidence="4">Belongs to the fibril-associated collagens with interrupted helices (FACIT) family.</text>
</comment>
<dbReference type="EMBL" id="D17511">
    <property type="protein sequence ID" value="BAA04463.1"/>
    <property type="molecule type" value="mRNA"/>
</dbReference>
<dbReference type="EMBL" id="L12215">
    <property type="protein sequence ID" value="AAA21834.1"/>
    <property type="molecule type" value="mRNA"/>
</dbReference>
<dbReference type="EMBL" id="X57984">
    <property type="protein sequence ID" value="CAA41049.1"/>
    <property type="molecule type" value="Genomic_DNA"/>
</dbReference>
<dbReference type="EMBL" id="M32136">
    <property type="protein sequence ID" value="AAA53523.1"/>
    <property type="molecule type" value="Genomic_DNA"/>
</dbReference>
<dbReference type="EMBL" id="M32132">
    <property type="protein sequence ID" value="AAA53523.1"/>
    <property type="status" value="JOINED"/>
    <property type="molecule type" value="Genomic_DNA"/>
</dbReference>
<dbReference type="EMBL" id="M32136">
    <property type="protein sequence ID" value="AAA53522.1"/>
    <property type="molecule type" value="Genomic_DNA"/>
</dbReference>
<dbReference type="EMBL" id="M32134">
    <property type="protein sequence ID" value="AAA53522.1"/>
    <property type="status" value="JOINED"/>
    <property type="molecule type" value="Genomic_DNA"/>
</dbReference>
<dbReference type="CCDS" id="CCDS35527.1">
    <molecule id="Q05722-1"/>
</dbReference>
<dbReference type="PIR" id="A35980">
    <property type="entry name" value="A35980"/>
</dbReference>
<dbReference type="PIR" id="S40495">
    <property type="entry name" value="S40495"/>
</dbReference>
<dbReference type="PIR" id="S42617">
    <property type="entry name" value="S42617"/>
</dbReference>
<dbReference type="RefSeq" id="NP_031766.3">
    <property type="nucleotide sequence ID" value="NM_007740.3"/>
</dbReference>
<dbReference type="SMR" id="Q05722"/>
<dbReference type="ComplexPortal" id="CPX-2970">
    <property type="entry name" value="Collagen type IX trimer"/>
</dbReference>
<dbReference type="FunCoup" id="Q05722">
    <property type="interactions" value="465"/>
</dbReference>
<dbReference type="STRING" id="10090.ENSMUSP00000051579"/>
<dbReference type="iPTMnet" id="Q05722"/>
<dbReference type="PhosphoSitePlus" id="Q05722"/>
<dbReference type="jPOST" id="Q05722"/>
<dbReference type="PaxDb" id="10090-ENSMUSP00000051579"/>
<dbReference type="ProteomicsDB" id="283475">
    <molecule id="Q05722-1"/>
</dbReference>
<dbReference type="ProteomicsDB" id="283476">
    <molecule id="Q05722-2"/>
</dbReference>
<dbReference type="DNASU" id="12839"/>
<dbReference type="GeneID" id="12839"/>
<dbReference type="KEGG" id="mmu:12839"/>
<dbReference type="AGR" id="MGI:88465"/>
<dbReference type="CTD" id="1297"/>
<dbReference type="MGI" id="MGI:88465">
    <property type="gene designation" value="Col9a1"/>
</dbReference>
<dbReference type="eggNOG" id="KOG3544">
    <property type="taxonomic scope" value="Eukaryota"/>
</dbReference>
<dbReference type="InParanoid" id="Q05722"/>
<dbReference type="OrthoDB" id="6161718at2759"/>
<dbReference type="PhylomeDB" id="Q05722"/>
<dbReference type="Reactome" id="R-MMU-1650814">
    <property type="pathway name" value="Collagen biosynthesis and modifying enzymes"/>
</dbReference>
<dbReference type="Reactome" id="R-MMU-186797">
    <property type="pathway name" value="Signaling by PDGF"/>
</dbReference>
<dbReference type="Reactome" id="R-MMU-2022090">
    <property type="pathway name" value="Assembly of collagen fibrils and other multimeric structures"/>
</dbReference>
<dbReference type="Reactome" id="R-MMU-216083">
    <property type="pathway name" value="Integrin cell surface interactions"/>
</dbReference>
<dbReference type="Reactome" id="R-MMU-3000178">
    <property type="pathway name" value="ECM proteoglycans"/>
</dbReference>
<dbReference type="Reactome" id="R-MMU-419037">
    <property type="pathway name" value="NCAM1 interactions"/>
</dbReference>
<dbReference type="Reactome" id="R-MMU-8948216">
    <property type="pathway name" value="Collagen chain trimerization"/>
</dbReference>
<dbReference type="BioGRID-ORCS" id="12839">
    <property type="hits" value="0 hits in 75 CRISPR screens"/>
</dbReference>
<dbReference type="ChiTaRS" id="Col9a1">
    <property type="organism name" value="mouse"/>
</dbReference>
<dbReference type="PRO" id="PR:Q05722"/>
<dbReference type="Proteomes" id="UP000000589">
    <property type="component" value="Unplaced"/>
</dbReference>
<dbReference type="RNAct" id="Q05722">
    <property type="molecule type" value="protein"/>
</dbReference>
<dbReference type="GO" id="GO:0005581">
    <property type="term" value="C:collagen trimer"/>
    <property type="evidence" value="ECO:0007669"/>
    <property type="project" value="UniProtKB-KW"/>
</dbReference>
<dbReference type="GO" id="GO:0005576">
    <property type="term" value="C:extracellular region"/>
    <property type="evidence" value="ECO:0007669"/>
    <property type="project" value="UniProtKB-KW"/>
</dbReference>
<dbReference type="GO" id="GO:0046872">
    <property type="term" value="F:metal ion binding"/>
    <property type="evidence" value="ECO:0007669"/>
    <property type="project" value="UniProtKB-KW"/>
</dbReference>
<dbReference type="GO" id="GO:0060349">
    <property type="term" value="P:bone morphogenesis"/>
    <property type="evidence" value="ECO:0000316"/>
    <property type="project" value="MGI"/>
</dbReference>
<dbReference type="GO" id="GO:0051216">
    <property type="term" value="P:cartilage development"/>
    <property type="evidence" value="ECO:0000315"/>
    <property type="project" value="MGI"/>
</dbReference>
<dbReference type="GO" id="GO:0035988">
    <property type="term" value="P:chondrocyte proliferation"/>
    <property type="evidence" value="ECO:0000316"/>
    <property type="project" value="MGI"/>
</dbReference>
<dbReference type="GO" id="GO:0003417">
    <property type="term" value="P:growth plate cartilage development"/>
    <property type="evidence" value="ECO:0000315"/>
    <property type="project" value="MGI"/>
</dbReference>
<dbReference type="GO" id="GO:0001501">
    <property type="term" value="P:skeletal system development"/>
    <property type="evidence" value="ECO:0000316"/>
    <property type="project" value="MGI"/>
</dbReference>
<dbReference type="GO" id="GO:0001894">
    <property type="term" value="P:tissue homeostasis"/>
    <property type="evidence" value="ECO:0000315"/>
    <property type="project" value="MGI"/>
</dbReference>
<dbReference type="FunFam" id="2.60.120.200:FF:000105">
    <property type="entry name" value="Collagen type IX alpha 1 chain"/>
    <property type="match status" value="1"/>
</dbReference>
<dbReference type="Gene3D" id="2.60.120.200">
    <property type="match status" value="1"/>
</dbReference>
<dbReference type="InterPro" id="IPR008160">
    <property type="entry name" value="Collagen"/>
</dbReference>
<dbReference type="InterPro" id="IPR050149">
    <property type="entry name" value="Collagen_superfamily"/>
</dbReference>
<dbReference type="InterPro" id="IPR013320">
    <property type="entry name" value="ConA-like_dom_sf"/>
</dbReference>
<dbReference type="InterPro" id="IPR048287">
    <property type="entry name" value="TSPN-like_N"/>
</dbReference>
<dbReference type="PANTHER" id="PTHR24023">
    <property type="entry name" value="COLLAGEN ALPHA"/>
    <property type="match status" value="1"/>
</dbReference>
<dbReference type="PANTHER" id="PTHR24023:SF1113">
    <property type="entry name" value="COLLAGEN ALPHA-2(IX) CHAIN-LIKE ISOFORM X1"/>
    <property type="match status" value="1"/>
</dbReference>
<dbReference type="Pfam" id="PF01391">
    <property type="entry name" value="Collagen"/>
    <property type="match status" value="11"/>
</dbReference>
<dbReference type="SMART" id="SM00210">
    <property type="entry name" value="TSPN"/>
    <property type="match status" value="1"/>
</dbReference>
<dbReference type="SUPFAM" id="SSF49899">
    <property type="entry name" value="Concanavalin A-like lectins/glucanases"/>
    <property type="match status" value="1"/>
</dbReference>
<evidence type="ECO:0000250" key="1"/>
<evidence type="ECO:0000255" key="2"/>
<evidence type="ECO:0000256" key="3">
    <source>
        <dbReference type="SAM" id="MobiDB-lite"/>
    </source>
</evidence>
<evidence type="ECO:0000305" key="4"/>
<keyword id="KW-0025">Alternative splicing</keyword>
<keyword id="KW-0176">Collagen</keyword>
<keyword id="KW-1015">Disulfide bond</keyword>
<keyword id="KW-0272">Extracellular matrix</keyword>
<keyword id="KW-0379">Hydroxylation</keyword>
<keyword id="KW-0479">Metal-binding</keyword>
<keyword id="KW-1185">Reference proteome</keyword>
<keyword id="KW-0677">Repeat</keyword>
<keyword id="KW-0964">Secreted</keyword>
<keyword id="KW-0732">Signal</keyword>
<keyword id="KW-0862">Zinc</keyword>
<proteinExistence type="evidence at transcript level"/>